<sequence>MLKGSIVALVTPFTKYGNVDYSELEFLVNKHCEAGTDAIVAVGTTGESTTLTHEEHIAVVNAMVELSAGRIDIIAGNGSNSTSEAVQLTEKMTQAGVSGFLNVTPYYNKPSLAGLIAHYQACADATDKPQILYNVPGRTSLDMTPDMVEQLAKIDNVIGIKEATGDVSRVQELKERCGDDFILLSGDDPTAREFMFAGGHGVISVTANIVPAKMKELVTAALAGDKESANQIDAELAPLHNMLFVESNPIPVKWSLALMGWVSANYRLPLTPPEESNQQLIESVLQKANLLNIQES</sequence>
<comment type="function">
    <text evidence="1">Catalyzes the condensation of (S)-aspartate-beta-semialdehyde [(S)-ASA] and pyruvate to 4-hydroxy-tetrahydrodipicolinate (HTPA).</text>
</comment>
<comment type="catalytic activity">
    <reaction evidence="1">
        <text>L-aspartate 4-semialdehyde + pyruvate = (2S,4S)-4-hydroxy-2,3,4,5-tetrahydrodipicolinate + H2O + H(+)</text>
        <dbReference type="Rhea" id="RHEA:34171"/>
        <dbReference type="ChEBI" id="CHEBI:15361"/>
        <dbReference type="ChEBI" id="CHEBI:15377"/>
        <dbReference type="ChEBI" id="CHEBI:15378"/>
        <dbReference type="ChEBI" id="CHEBI:67139"/>
        <dbReference type="ChEBI" id="CHEBI:537519"/>
        <dbReference type="EC" id="4.3.3.7"/>
    </reaction>
</comment>
<comment type="pathway">
    <text evidence="1">Amino-acid biosynthesis; L-lysine biosynthesis via DAP pathway; (S)-tetrahydrodipicolinate from L-aspartate: step 3/4.</text>
</comment>
<comment type="subunit">
    <text evidence="1">Homotetramer; dimer of dimers.</text>
</comment>
<comment type="subcellular location">
    <subcellularLocation>
        <location evidence="1">Cytoplasm</location>
    </subcellularLocation>
</comment>
<comment type="similarity">
    <text evidence="1">Belongs to the DapA family.</text>
</comment>
<comment type="caution">
    <text evidence="2">Was originally thought to be a dihydrodipicolinate synthase (DHDPS), catalyzing the condensation of (S)-aspartate-beta-semialdehyde [(S)-ASA] and pyruvate to dihydrodipicolinate (DHDP). However, it was shown in E.coli that the product of the enzymatic reaction is not dihydrodipicolinate but in fact (4S)-4-hydroxy-2,3,4,5-tetrahydro-(2S)-dipicolinic acid (HTPA), and that the consecutive dehydration reaction leading to DHDP is not spontaneous but catalyzed by DapB.</text>
</comment>
<organism>
    <name type="scientific">Idiomarina loihiensis (strain ATCC BAA-735 / DSM 15497 / L2-TR)</name>
    <dbReference type="NCBI Taxonomy" id="283942"/>
    <lineage>
        <taxon>Bacteria</taxon>
        <taxon>Pseudomonadati</taxon>
        <taxon>Pseudomonadota</taxon>
        <taxon>Gammaproteobacteria</taxon>
        <taxon>Alteromonadales</taxon>
        <taxon>Idiomarinaceae</taxon>
        <taxon>Idiomarina</taxon>
    </lineage>
</organism>
<gene>
    <name evidence="1" type="primary">dapA</name>
    <name type="ordered locus">IL1460</name>
</gene>
<name>DAPA_IDILO</name>
<protein>
    <recommendedName>
        <fullName evidence="1">4-hydroxy-tetrahydrodipicolinate synthase</fullName>
        <shortName evidence="1">HTPA synthase</shortName>
        <ecNumber evidence="1">4.3.3.7</ecNumber>
    </recommendedName>
</protein>
<keyword id="KW-0028">Amino-acid biosynthesis</keyword>
<keyword id="KW-0963">Cytoplasm</keyword>
<keyword id="KW-0220">Diaminopimelate biosynthesis</keyword>
<keyword id="KW-0456">Lyase</keyword>
<keyword id="KW-0457">Lysine biosynthesis</keyword>
<keyword id="KW-1185">Reference proteome</keyword>
<keyword id="KW-0704">Schiff base</keyword>
<reference key="1">
    <citation type="journal article" date="2004" name="Proc. Natl. Acad. Sci. U.S.A.">
        <title>Genome sequence of the deep-sea gamma-proteobacterium Idiomarina loihiensis reveals amino acid fermentation as a source of carbon and energy.</title>
        <authorList>
            <person name="Hou S."/>
            <person name="Saw J.H."/>
            <person name="Lee K.S."/>
            <person name="Freitas T.A."/>
            <person name="Belisle C."/>
            <person name="Kawarabayasi Y."/>
            <person name="Donachie S.P."/>
            <person name="Pikina A."/>
            <person name="Galperin M.Y."/>
            <person name="Koonin E.V."/>
            <person name="Makarova K.S."/>
            <person name="Omelchenko M.V."/>
            <person name="Sorokin A."/>
            <person name="Wolf Y.I."/>
            <person name="Li Q.X."/>
            <person name="Keum Y.S."/>
            <person name="Campbell S."/>
            <person name="Denery J."/>
            <person name="Aizawa S."/>
            <person name="Shibata S."/>
            <person name="Malahoff A."/>
            <person name="Alam M."/>
        </authorList>
    </citation>
    <scope>NUCLEOTIDE SEQUENCE [LARGE SCALE GENOMIC DNA]</scope>
    <source>
        <strain>ATCC BAA-735 / DSM 15497 / L2-TR</strain>
    </source>
</reference>
<evidence type="ECO:0000255" key="1">
    <source>
        <dbReference type="HAMAP-Rule" id="MF_00418"/>
    </source>
</evidence>
<evidence type="ECO:0000305" key="2"/>
<proteinExistence type="inferred from homology"/>
<accession>Q5QU03</accession>
<feature type="chain" id="PRO_0000103119" description="4-hydroxy-tetrahydrodipicolinate synthase">
    <location>
        <begin position="1"/>
        <end position="296"/>
    </location>
</feature>
<feature type="active site" description="Proton donor/acceptor" evidence="1">
    <location>
        <position position="133"/>
    </location>
</feature>
<feature type="active site" description="Schiff-base intermediate with substrate" evidence="1">
    <location>
        <position position="161"/>
    </location>
</feature>
<feature type="binding site" evidence="1">
    <location>
        <position position="45"/>
    </location>
    <ligand>
        <name>pyruvate</name>
        <dbReference type="ChEBI" id="CHEBI:15361"/>
    </ligand>
</feature>
<feature type="binding site" evidence="1">
    <location>
        <position position="203"/>
    </location>
    <ligand>
        <name>pyruvate</name>
        <dbReference type="ChEBI" id="CHEBI:15361"/>
    </ligand>
</feature>
<feature type="site" description="Part of a proton relay during catalysis" evidence="1">
    <location>
        <position position="44"/>
    </location>
</feature>
<feature type="site" description="Part of a proton relay during catalysis" evidence="1">
    <location>
        <position position="107"/>
    </location>
</feature>
<dbReference type="EC" id="4.3.3.7" evidence="1"/>
<dbReference type="EMBL" id="AE017340">
    <property type="protein sequence ID" value="AAV82300.1"/>
    <property type="molecule type" value="Genomic_DNA"/>
</dbReference>
<dbReference type="RefSeq" id="WP_011234706.1">
    <property type="nucleotide sequence ID" value="NC_006512.1"/>
</dbReference>
<dbReference type="SMR" id="Q5QU03"/>
<dbReference type="STRING" id="283942.IL1460"/>
<dbReference type="GeneID" id="41336637"/>
<dbReference type="KEGG" id="ilo:IL1460"/>
<dbReference type="eggNOG" id="COG0329">
    <property type="taxonomic scope" value="Bacteria"/>
</dbReference>
<dbReference type="HOGENOM" id="CLU_049343_7_0_6"/>
<dbReference type="OrthoDB" id="9782828at2"/>
<dbReference type="UniPathway" id="UPA00034">
    <property type="reaction ID" value="UER00017"/>
</dbReference>
<dbReference type="Proteomes" id="UP000001171">
    <property type="component" value="Chromosome"/>
</dbReference>
<dbReference type="GO" id="GO:0005829">
    <property type="term" value="C:cytosol"/>
    <property type="evidence" value="ECO:0007669"/>
    <property type="project" value="TreeGrafter"/>
</dbReference>
<dbReference type="GO" id="GO:0008840">
    <property type="term" value="F:4-hydroxy-tetrahydrodipicolinate synthase activity"/>
    <property type="evidence" value="ECO:0007669"/>
    <property type="project" value="UniProtKB-UniRule"/>
</dbReference>
<dbReference type="GO" id="GO:0019877">
    <property type="term" value="P:diaminopimelate biosynthetic process"/>
    <property type="evidence" value="ECO:0007669"/>
    <property type="project" value="UniProtKB-UniRule"/>
</dbReference>
<dbReference type="GO" id="GO:0009089">
    <property type="term" value="P:lysine biosynthetic process via diaminopimelate"/>
    <property type="evidence" value="ECO:0007669"/>
    <property type="project" value="UniProtKB-UniRule"/>
</dbReference>
<dbReference type="CDD" id="cd00950">
    <property type="entry name" value="DHDPS"/>
    <property type="match status" value="1"/>
</dbReference>
<dbReference type="Gene3D" id="3.20.20.70">
    <property type="entry name" value="Aldolase class I"/>
    <property type="match status" value="1"/>
</dbReference>
<dbReference type="HAMAP" id="MF_00418">
    <property type="entry name" value="DapA"/>
    <property type="match status" value="1"/>
</dbReference>
<dbReference type="InterPro" id="IPR013785">
    <property type="entry name" value="Aldolase_TIM"/>
</dbReference>
<dbReference type="InterPro" id="IPR005263">
    <property type="entry name" value="DapA"/>
</dbReference>
<dbReference type="InterPro" id="IPR002220">
    <property type="entry name" value="DapA-like"/>
</dbReference>
<dbReference type="InterPro" id="IPR020625">
    <property type="entry name" value="Schiff_base-form_aldolases_AS"/>
</dbReference>
<dbReference type="InterPro" id="IPR020624">
    <property type="entry name" value="Schiff_base-form_aldolases_CS"/>
</dbReference>
<dbReference type="NCBIfam" id="TIGR00674">
    <property type="entry name" value="dapA"/>
    <property type="match status" value="1"/>
</dbReference>
<dbReference type="PANTHER" id="PTHR12128:SF66">
    <property type="entry name" value="4-HYDROXY-2-OXOGLUTARATE ALDOLASE, MITOCHONDRIAL"/>
    <property type="match status" value="1"/>
</dbReference>
<dbReference type="PANTHER" id="PTHR12128">
    <property type="entry name" value="DIHYDRODIPICOLINATE SYNTHASE"/>
    <property type="match status" value="1"/>
</dbReference>
<dbReference type="Pfam" id="PF00701">
    <property type="entry name" value="DHDPS"/>
    <property type="match status" value="1"/>
</dbReference>
<dbReference type="PIRSF" id="PIRSF001365">
    <property type="entry name" value="DHDPS"/>
    <property type="match status" value="1"/>
</dbReference>
<dbReference type="PRINTS" id="PR00146">
    <property type="entry name" value="DHPICSNTHASE"/>
</dbReference>
<dbReference type="SMART" id="SM01130">
    <property type="entry name" value="DHDPS"/>
    <property type="match status" value="1"/>
</dbReference>
<dbReference type="SUPFAM" id="SSF51569">
    <property type="entry name" value="Aldolase"/>
    <property type="match status" value="1"/>
</dbReference>
<dbReference type="PROSITE" id="PS00665">
    <property type="entry name" value="DHDPS_1"/>
    <property type="match status" value="1"/>
</dbReference>
<dbReference type="PROSITE" id="PS00666">
    <property type="entry name" value="DHDPS_2"/>
    <property type="match status" value="1"/>
</dbReference>